<gene>
    <name type="primary">HFE</name>
</gene>
<dbReference type="EMBL" id="AY007541">
    <property type="protein sequence ID" value="AAG23701.1"/>
    <property type="molecule type" value="mRNA"/>
</dbReference>
<dbReference type="SMR" id="Q9GKZ0"/>
<dbReference type="GlyCosmos" id="Q9GKZ0">
    <property type="glycosylation" value="3 sites, No reported glycans"/>
</dbReference>
<dbReference type="GO" id="GO:0009897">
    <property type="term" value="C:external side of plasma membrane"/>
    <property type="evidence" value="ECO:0007669"/>
    <property type="project" value="TreeGrafter"/>
</dbReference>
<dbReference type="GO" id="GO:0005615">
    <property type="term" value="C:extracellular space"/>
    <property type="evidence" value="ECO:0007669"/>
    <property type="project" value="TreeGrafter"/>
</dbReference>
<dbReference type="GO" id="GO:1990459">
    <property type="term" value="F:transferrin receptor binding"/>
    <property type="evidence" value="ECO:0007669"/>
    <property type="project" value="TreeGrafter"/>
</dbReference>
<dbReference type="GO" id="GO:0006826">
    <property type="term" value="P:iron ion transport"/>
    <property type="evidence" value="ECO:0007669"/>
    <property type="project" value="UniProtKB-KW"/>
</dbReference>
<dbReference type="GO" id="GO:0034756">
    <property type="term" value="P:regulation of iron ion transport"/>
    <property type="evidence" value="ECO:0007669"/>
    <property type="project" value="TreeGrafter"/>
</dbReference>
<dbReference type="GO" id="GO:1990641">
    <property type="term" value="P:response to iron ion starvation"/>
    <property type="evidence" value="ECO:0007669"/>
    <property type="project" value="TreeGrafter"/>
</dbReference>
<dbReference type="FunFam" id="3.30.500.10:FF:000001">
    <property type="entry name" value="H-2 class I histocompatibility antigen, alpha chain"/>
    <property type="match status" value="1"/>
</dbReference>
<dbReference type="FunFam" id="2.60.40.10:FF:000204">
    <property type="entry name" value="Major histocompatibility complex, class I-related protein"/>
    <property type="match status" value="1"/>
</dbReference>
<dbReference type="Gene3D" id="2.60.40.10">
    <property type="entry name" value="Immunoglobulins"/>
    <property type="match status" value="1"/>
</dbReference>
<dbReference type="Gene3D" id="3.30.500.10">
    <property type="entry name" value="MHC class I-like antigen recognition-like"/>
    <property type="match status" value="1"/>
</dbReference>
<dbReference type="InterPro" id="IPR007110">
    <property type="entry name" value="Ig-like_dom"/>
</dbReference>
<dbReference type="InterPro" id="IPR036179">
    <property type="entry name" value="Ig-like_dom_sf"/>
</dbReference>
<dbReference type="InterPro" id="IPR013783">
    <property type="entry name" value="Ig-like_fold"/>
</dbReference>
<dbReference type="InterPro" id="IPR003006">
    <property type="entry name" value="Ig/MHC_CS"/>
</dbReference>
<dbReference type="InterPro" id="IPR003597">
    <property type="entry name" value="Ig_C1-set"/>
</dbReference>
<dbReference type="InterPro" id="IPR050208">
    <property type="entry name" value="MHC_class-I_related"/>
</dbReference>
<dbReference type="InterPro" id="IPR011161">
    <property type="entry name" value="MHC_I-like_Ag-recog"/>
</dbReference>
<dbReference type="InterPro" id="IPR037055">
    <property type="entry name" value="MHC_I-like_Ag-recog_sf"/>
</dbReference>
<dbReference type="InterPro" id="IPR011162">
    <property type="entry name" value="MHC_I/II-like_Ag-recog"/>
</dbReference>
<dbReference type="InterPro" id="IPR001039">
    <property type="entry name" value="MHC_I_a_a1/a2"/>
</dbReference>
<dbReference type="PANTHER" id="PTHR16675:SF172">
    <property type="entry name" value="HEREDITARY HEMOCHROMATOSIS PROTEIN"/>
    <property type="match status" value="1"/>
</dbReference>
<dbReference type="PANTHER" id="PTHR16675">
    <property type="entry name" value="MHC CLASS I-RELATED"/>
    <property type="match status" value="1"/>
</dbReference>
<dbReference type="Pfam" id="PF07654">
    <property type="entry name" value="C1-set"/>
    <property type="match status" value="1"/>
</dbReference>
<dbReference type="Pfam" id="PF00129">
    <property type="entry name" value="MHC_I"/>
    <property type="match status" value="1"/>
</dbReference>
<dbReference type="PRINTS" id="PR01638">
    <property type="entry name" value="MHCCLASSI"/>
</dbReference>
<dbReference type="SMART" id="SM00407">
    <property type="entry name" value="IGc1"/>
    <property type="match status" value="1"/>
</dbReference>
<dbReference type="SUPFAM" id="SSF48726">
    <property type="entry name" value="Immunoglobulin"/>
    <property type="match status" value="1"/>
</dbReference>
<dbReference type="SUPFAM" id="SSF54452">
    <property type="entry name" value="MHC antigen-recognition domain"/>
    <property type="match status" value="1"/>
</dbReference>
<dbReference type="PROSITE" id="PS50835">
    <property type="entry name" value="IG_LIKE"/>
    <property type="match status" value="1"/>
</dbReference>
<dbReference type="PROSITE" id="PS00290">
    <property type="entry name" value="IG_MHC"/>
    <property type="match status" value="1"/>
</dbReference>
<proteinExistence type="evidence at transcript level"/>
<feature type="signal peptide" evidence="1">
    <location>
        <begin position="1"/>
        <end position="22"/>
    </location>
</feature>
<feature type="chain" id="PRO_0000018889" description="Hereditary hemochromatosis protein homolog">
    <location>
        <begin position="23"/>
        <end position="348"/>
    </location>
</feature>
<feature type="topological domain" description="Extracellular" evidence="2">
    <location>
        <begin position="23"/>
        <end position="306"/>
    </location>
</feature>
<feature type="transmembrane region" description="Helical" evidence="3">
    <location>
        <begin position="307"/>
        <end position="330"/>
    </location>
</feature>
<feature type="topological domain" description="Cytoplasmic" evidence="2">
    <location>
        <begin position="331"/>
        <end position="348"/>
    </location>
</feature>
<feature type="domain" description="Ig-like C1-type">
    <location>
        <begin position="207"/>
        <end position="296"/>
    </location>
</feature>
<feature type="region of interest" description="Alpha-1">
    <location>
        <begin position="23"/>
        <end position="114"/>
    </location>
</feature>
<feature type="region of interest" description="Alpha-2">
    <location>
        <begin position="115"/>
        <end position="205"/>
    </location>
</feature>
<feature type="region of interest" description="Alpha-3">
    <location>
        <begin position="206"/>
        <end position="297"/>
    </location>
</feature>
<feature type="region of interest" description="Connecting peptide">
    <location>
        <begin position="298"/>
        <end position="306"/>
    </location>
</feature>
<feature type="glycosylation site" description="N-linked (GlcNAc...) asparagine" evidence="3">
    <location>
        <position position="110"/>
    </location>
</feature>
<feature type="glycosylation site" description="N-linked (GlcNAc...) asparagine" evidence="3">
    <location>
        <position position="130"/>
    </location>
</feature>
<feature type="glycosylation site" description="N-linked (GlcNAc...) asparagine" evidence="3">
    <location>
        <position position="234"/>
    </location>
</feature>
<feature type="disulfide bond" evidence="4">
    <location>
        <begin position="124"/>
        <end position="187"/>
    </location>
</feature>
<feature type="disulfide bond" evidence="4">
    <location>
        <begin position="225"/>
        <end position="282"/>
    </location>
</feature>
<evidence type="ECO:0000250" key="1"/>
<evidence type="ECO:0000250" key="2">
    <source>
        <dbReference type="UniProtKB" id="Q30201"/>
    </source>
</evidence>
<evidence type="ECO:0000255" key="3"/>
<evidence type="ECO:0000255" key="4">
    <source>
        <dbReference type="PROSITE-ProRule" id="PRU00114"/>
    </source>
</evidence>
<evidence type="ECO:0000305" key="5"/>
<comment type="function">
    <text evidence="2">Binds to transferrin receptor (TFR) and reduces its affinity for iron-loaded transferrin.</text>
</comment>
<comment type="subunit">
    <text evidence="2">Binds TFR through the extracellular domain in a pH-dependent manner.</text>
</comment>
<comment type="subcellular location">
    <subcellularLocation>
        <location evidence="2">Cell membrane</location>
        <topology evidence="2">Single-pass type I membrane protein</topology>
    </subcellularLocation>
</comment>
<comment type="similarity">
    <text evidence="5">Belongs to the MHC class I family.</text>
</comment>
<sequence length="348" mass="39822">MGPRARPALFFLILLRTVAAQGRPPRSHSLRYLFMGASERDHGLPLFEALGYVDDELFVAYNHESRRAESRAQWVLGEAHSQLWLQLSQSLKGWDHMFIVDFWTIMDNHNHSKESHTLQVILGCEVQEDNSTRGFWKYGYDGQDHLEFCPETLDWRAAESRALTTKLEWEVNKIRAKQNRAYLERDCPEQLQWLLELGRGVLDQQVPPLVKVTHHVASAVTTLRCQALNFYPQNITMRWLKDRKPMDVKDAESKDVLPSGDGTYQSWEALAVPPGEEQRYTCQVEHPGLDQPLTATWEPSLSNTLVTGVISGIAVCVIIFFIGILFRILRKRQASRGAMGDYVLGECE</sequence>
<name>HFE_CERSI</name>
<organism>
    <name type="scientific">Ceratotherium simum</name>
    <name type="common">White rhinoceros</name>
    <name type="synonym">Square-lipped rhinoceros</name>
    <dbReference type="NCBI Taxonomy" id="9807"/>
    <lineage>
        <taxon>Eukaryota</taxon>
        <taxon>Metazoa</taxon>
        <taxon>Chordata</taxon>
        <taxon>Craniata</taxon>
        <taxon>Vertebrata</taxon>
        <taxon>Euteleostomi</taxon>
        <taxon>Mammalia</taxon>
        <taxon>Eutheria</taxon>
        <taxon>Laurasiatheria</taxon>
        <taxon>Perissodactyla</taxon>
        <taxon>Rhinocerotidae</taxon>
        <taxon>Ceratotherium</taxon>
    </lineage>
</organism>
<keyword id="KW-1003">Cell membrane</keyword>
<keyword id="KW-1015">Disulfide bond</keyword>
<keyword id="KW-0325">Glycoprotein</keyword>
<keyword id="KW-0406">Ion transport</keyword>
<keyword id="KW-0408">Iron</keyword>
<keyword id="KW-0410">Iron transport</keyword>
<keyword id="KW-0472">Membrane</keyword>
<keyword id="KW-0732">Signal</keyword>
<keyword id="KW-0812">Transmembrane</keyword>
<keyword id="KW-1133">Transmembrane helix</keyword>
<keyword id="KW-0813">Transport</keyword>
<protein>
    <recommendedName>
        <fullName>Hereditary hemochromatosis protein homolog</fullName>
    </recommendedName>
</protein>
<accession>Q9GKZ0</accession>
<reference key="1">
    <citation type="submission" date="2000-08" db="EMBL/GenBank/DDBJ databases">
        <title>Rhinoceros HFE polymorphisms.</title>
        <authorList>
            <person name="West C.J."/>
            <person name="Worley M."/>
            <person name="Beutler E."/>
        </authorList>
    </citation>
    <scope>NUCLEOTIDE SEQUENCE [MRNA]</scope>
</reference>